<organism>
    <name type="scientific">Mycobacterium sp. (strain JLS)</name>
    <dbReference type="NCBI Taxonomy" id="164757"/>
    <lineage>
        <taxon>Bacteria</taxon>
        <taxon>Bacillati</taxon>
        <taxon>Actinomycetota</taxon>
        <taxon>Actinomycetes</taxon>
        <taxon>Mycobacteriales</taxon>
        <taxon>Mycobacteriaceae</taxon>
        <taxon>Mycobacterium</taxon>
    </lineage>
</organism>
<proteinExistence type="inferred from homology"/>
<sequence>MSLIREIAGGPYALAAGPDGAMWVTLVHDGAIARVGADGAVDRFPVADGSRPSLISAGPDGALWFTRNGDDRIGRLTTAGELTEFPLSEGSAPFGICAGADGALWFTEMGSGGIGRITVDGETSGWASVGGTPSMITRGPDDAVWFTLNQGNAIGRLHPRDGVTMRELPTRGAGPVGITATHDDAIWFTEILADKLGRIPLDGALQEIDLPGKPHAVVADPSGGVWVSLWGADRLARVSADGDIETFDLPPGSEPHGLAFGPDGGLWVALESGFVLRMPD</sequence>
<dbReference type="EC" id="4.2.99.-" evidence="1"/>
<dbReference type="EMBL" id="CP000580">
    <property type="protein sequence ID" value="ABN99620.1"/>
    <property type="molecule type" value="Genomic_DNA"/>
</dbReference>
<dbReference type="SMR" id="A3Q393"/>
<dbReference type="KEGG" id="mjl:Mjls_3844"/>
<dbReference type="HOGENOM" id="CLU_054751_1_0_11"/>
<dbReference type="BioCyc" id="MSP164757:G1G8C-3881-MONOMER"/>
<dbReference type="GO" id="GO:0030288">
    <property type="term" value="C:outer membrane-bounded periplasmic space"/>
    <property type="evidence" value="ECO:0007669"/>
    <property type="project" value="TreeGrafter"/>
</dbReference>
<dbReference type="GO" id="GO:0016835">
    <property type="term" value="F:carbon-oxygen lyase activity"/>
    <property type="evidence" value="ECO:0007669"/>
    <property type="project" value="UniProtKB-UniRule"/>
</dbReference>
<dbReference type="GO" id="GO:0000287">
    <property type="term" value="F:magnesium ion binding"/>
    <property type="evidence" value="ECO:0007669"/>
    <property type="project" value="InterPro"/>
</dbReference>
<dbReference type="GO" id="GO:0017001">
    <property type="term" value="P:antibiotic catabolic process"/>
    <property type="evidence" value="ECO:0007669"/>
    <property type="project" value="UniProtKB-UniRule"/>
</dbReference>
<dbReference type="GO" id="GO:0046677">
    <property type="term" value="P:response to antibiotic"/>
    <property type="evidence" value="ECO:0007669"/>
    <property type="project" value="UniProtKB-KW"/>
</dbReference>
<dbReference type="Gene3D" id="2.130.10.10">
    <property type="entry name" value="YVTN repeat-like/Quinoprotein amine dehydrogenase"/>
    <property type="match status" value="2"/>
</dbReference>
<dbReference type="HAMAP" id="MF_01282">
    <property type="entry name" value="VirginiamycinB_lyase"/>
    <property type="match status" value="1"/>
</dbReference>
<dbReference type="InterPro" id="IPR011217">
    <property type="entry name" value="Streptogrm_lyase"/>
</dbReference>
<dbReference type="InterPro" id="IPR051344">
    <property type="entry name" value="Vgb"/>
</dbReference>
<dbReference type="InterPro" id="IPR015943">
    <property type="entry name" value="WD40/YVTN_repeat-like_dom_sf"/>
</dbReference>
<dbReference type="PANTHER" id="PTHR40274">
    <property type="entry name" value="VIRGINIAMYCIN B LYASE"/>
    <property type="match status" value="1"/>
</dbReference>
<dbReference type="PANTHER" id="PTHR40274:SF3">
    <property type="entry name" value="VIRGINIAMYCIN B LYASE"/>
    <property type="match status" value="1"/>
</dbReference>
<dbReference type="Pfam" id="PF24684">
    <property type="entry name" value="Vgb_lyase"/>
    <property type="match status" value="1"/>
</dbReference>
<dbReference type="SUPFAM" id="SSF63829">
    <property type="entry name" value="Calcium-dependent phosphotriesterase"/>
    <property type="match status" value="2"/>
</dbReference>
<evidence type="ECO:0000255" key="1">
    <source>
        <dbReference type="HAMAP-Rule" id="MF_01282"/>
    </source>
</evidence>
<reference key="1">
    <citation type="submission" date="2007-02" db="EMBL/GenBank/DDBJ databases">
        <title>Complete sequence of Mycobacterium sp. JLS.</title>
        <authorList>
            <consortium name="US DOE Joint Genome Institute"/>
            <person name="Copeland A."/>
            <person name="Lucas S."/>
            <person name="Lapidus A."/>
            <person name="Barry K."/>
            <person name="Detter J.C."/>
            <person name="Glavina del Rio T."/>
            <person name="Hammon N."/>
            <person name="Israni S."/>
            <person name="Dalin E."/>
            <person name="Tice H."/>
            <person name="Pitluck S."/>
            <person name="Chain P."/>
            <person name="Malfatti S."/>
            <person name="Shin M."/>
            <person name="Vergez L."/>
            <person name="Schmutz J."/>
            <person name="Larimer F."/>
            <person name="Land M."/>
            <person name="Hauser L."/>
            <person name="Kyrpides N."/>
            <person name="Mikhailova N."/>
            <person name="Miller C.D."/>
            <person name="Anderson A.J."/>
            <person name="Sims R.C."/>
            <person name="Richardson P."/>
        </authorList>
    </citation>
    <scope>NUCLEOTIDE SEQUENCE [LARGE SCALE GENOMIC DNA]</scope>
    <source>
        <strain>JLS</strain>
    </source>
</reference>
<comment type="function">
    <text evidence="1">Inactivates the type B streptogramin antibiotics by linearizing the lactone ring at the ester linkage, generating a free phenylglycine carboxylate and converting the threonyl moiety into 2-amino-butenoic acid.</text>
</comment>
<comment type="cofactor">
    <cofactor evidence="1">
        <name>Mg(2+)</name>
        <dbReference type="ChEBI" id="CHEBI:18420"/>
    </cofactor>
</comment>
<comment type="subunit">
    <text evidence="1">Monomer.</text>
</comment>
<comment type="similarity">
    <text evidence="1">Belongs to the Vgb family.</text>
</comment>
<protein>
    <recommendedName>
        <fullName evidence="1">Virginiamycin B lyase</fullName>
        <ecNumber evidence="1">4.2.99.-</ecNumber>
    </recommendedName>
    <alternativeName>
        <fullName evidence="1">Streptogramin B lyase</fullName>
    </alternativeName>
</protein>
<gene>
    <name evidence="1" type="primary">vgb</name>
    <name type="ordered locus">Mjls_3844</name>
</gene>
<keyword id="KW-0046">Antibiotic resistance</keyword>
<keyword id="KW-0456">Lyase</keyword>
<keyword id="KW-0460">Magnesium</keyword>
<keyword id="KW-0479">Metal-binding</keyword>
<accession>A3Q393</accession>
<name>VGB_MYCSJ</name>
<feature type="chain" id="PRO_0000313772" description="Virginiamycin B lyase">
    <location>
        <begin position="1"/>
        <end position="280"/>
    </location>
</feature>
<feature type="active site" description="Proton acceptor" evidence="1">
    <location>
        <position position="256"/>
    </location>
</feature>
<feature type="binding site" evidence="1">
    <location>
        <position position="215"/>
    </location>
    <ligand>
        <name>substrate</name>
    </ligand>
</feature>
<feature type="binding site" evidence="1">
    <location>
        <position position="254"/>
    </location>
    <ligand>
        <name>Mg(2+)</name>
        <dbReference type="ChEBI" id="CHEBI:18420"/>
    </ligand>
</feature>
<feature type="binding site" evidence="1">
    <location>
        <position position="271"/>
    </location>
    <ligand>
        <name>Mg(2+)</name>
        <dbReference type="ChEBI" id="CHEBI:18420"/>
    </ligand>
</feature>